<feature type="chain" id="PRO_0000370896" description="ATP synthase subunit delta">
    <location>
        <begin position="1"/>
        <end position="186"/>
    </location>
</feature>
<accession>Q8A9U8</accession>
<sequence>MEVGVLSMRYAKAMIEYAQEKGVEDRLYNEFFTLSHSFRVQPGLREVLDNPVVSVKDKLALICTAADGNGESSREFVRFITLVLRNRREGYLQFISLMYLDLYRKLKHIGVGKLITAVPVDKETENRIRSAAAHILHAQMELDTVIDPSIEGGFIFDINDYRLDASIATQLKRVKQQFIDKNRRIV</sequence>
<protein>
    <recommendedName>
        <fullName evidence="1">ATP synthase subunit delta</fullName>
    </recommendedName>
    <alternativeName>
        <fullName evidence="1">ATP synthase F(1) sector subunit delta</fullName>
    </alternativeName>
    <alternativeName>
        <fullName evidence="1">F-type ATPase subunit delta</fullName>
        <shortName evidence="1">F-ATPase subunit delta</shortName>
    </alternativeName>
</protein>
<name>ATPD_BACTN</name>
<evidence type="ECO:0000255" key="1">
    <source>
        <dbReference type="HAMAP-Rule" id="MF_01416"/>
    </source>
</evidence>
<proteinExistence type="inferred from homology"/>
<gene>
    <name evidence="1" type="primary">atpH</name>
    <name type="ordered locus">BT_0717</name>
</gene>
<comment type="function">
    <text evidence="1">F(1)F(0) ATP synthase produces ATP from ADP in the presence of a proton or sodium gradient. F-type ATPases consist of two structural domains, F(1) containing the extramembraneous catalytic core and F(0) containing the membrane proton channel, linked together by a central stalk and a peripheral stalk. During catalysis, ATP synthesis in the catalytic domain of F(1) is coupled via a rotary mechanism of the central stalk subunits to proton translocation.</text>
</comment>
<comment type="function">
    <text evidence="1">This protein is part of the stalk that links CF(0) to CF(1). It either transmits conformational changes from CF(0) to CF(1) or is implicated in proton conduction.</text>
</comment>
<comment type="subunit">
    <text evidence="1">F-type ATPases have 2 components, F(1) - the catalytic core - and F(0) - the membrane proton channel. F(1) has five subunits: alpha(3), beta(3), gamma(1), delta(1), epsilon(1). F(0) has three main subunits: a(1), b(2) and c(10-14). The alpha and beta chains form an alternating ring which encloses part of the gamma chain. F(1) is attached to F(0) by a central stalk formed by the gamma and epsilon chains, while a peripheral stalk is formed by the delta and b chains.</text>
</comment>
<comment type="subcellular location">
    <subcellularLocation>
        <location evidence="1">Cell inner membrane</location>
        <topology evidence="1">Peripheral membrane protein</topology>
    </subcellularLocation>
</comment>
<comment type="similarity">
    <text evidence="1">Belongs to the ATPase delta chain family.</text>
</comment>
<reference key="1">
    <citation type="journal article" date="2003" name="Science">
        <title>A genomic view of the human-Bacteroides thetaiotaomicron symbiosis.</title>
        <authorList>
            <person name="Xu J."/>
            <person name="Bjursell M.K."/>
            <person name="Himrod J."/>
            <person name="Deng S."/>
            <person name="Carmichael L.K."/>
            <person name="Chiang H.C."/>
            <person name="Hooper L.V."/>
            <person name="Gordon J.I."/>
        </authorList>
    </citation>
    <scope>NUCLEOTIDE SEQUENCE [LARGE SCALE GENOMIC DNA]</scope>
    <source>
        <strain>ATCC 29148 / DSM 2079 / JCM 5827 / CCUG 10774 / NCTC 10582 / VPI-5482 / E50</strain>
    </source>
</reference>
<keyword id="KW-0066">ATP synthesis</keyword>
<keyword id="KW-0997">Cell inner membrane</keyword>
<keyword id="KW-1003">Cell membrane</keyword>
<keyword id="KW-0139">CF(1)</keyword>
<keyword id="KW-0375">Hydrogen ion transport</keyword>
<keyword id="KW-0406">Ion transport</keyword>
<keyword id="KW-0472">Membrane</keyword>
<keyword id="KW-1185">Reference proteome</keyword>
<keyword id="KW-0813">Transport</keyword>
<dbReference type="EMBL" id="AE015928">
    <property type="protein sequence ID" value="AAO75824.1"/>
    <property type="molecule type" value="Genomic_DNA"/>
</dbReference>
<dbReference type="RefSeq" id="NP_809630.1">
    <property type="nucleotide sequence ID" value="NC_004663.1"/>
</dbReference>
<dbReference type="RefSeq" id="WP_008761392.1">
    <property type="nucleotide sequence ID" value="NZ_UYXG01000002.1"/>
</dbReference>
<dbReference type="SMR" id="Q8A9U8"/>
<dbReference type="STRING" id="226186.BT_0717"/>
<dbReference type="PaxDb" id="226186-BT_0717"/>
<dbReference type="DNASU" id="1073533"/>
<dbReference type="EnsemblBacteria" id="AAO75824">
    <property type="protein sequence ID" value="AAO75824"/>
    <property type="gene ID" value="BT_0717"/>
</dbReference>
<dbReference type="KEGG" id="bth:BT_0717"/>
<dbReference type="eggNOG" id="COG0712">
    <property type="taxonomic scope" value="Bacteria"/>
</dbReference>
<dbReference type="HOGENOM" id="CLU_085114_4_0_10"/>
<dbReference type="InParanoid" id="Q8A9U8"/>
<dbReference type="OrthoDB" id="9802471at2"/>
<dbReference type="Proteomes" id="UP000001414">
    <property type="component" value="Chromosome"/>
</dbReference>
<dbReference type="GO" id="GO:0005886">
    <property type="term" value="C:plasma membrane"/>
    <property type="evidence" value="ECO:0007669"/>
    <property type="project" value="UniProtKB-SubCell"/>
</dbReference>
<dbReference type="GO" id="GO:0045259">
    <property type="term" value="C:proton-transporting ATP synthase complex"/>
    <property type="evidence" value="ECO:0007669"/>
    <property type="project" value="UniProtKB-KW"/>
</dbReference>
<dbReference type="GO" id="GO:0046933">
    <property type="term" value="F:proton-transporting ATP synthase activity, rotational mechanism"/>
    <property type="evidence" value="ECO:0007669"/>
    <property type="project" value="UniProtKB-UniRule"/>
</dbReference>
<dbReference type="GO" id="GO:0015986">
    <property type="term" value="P:proton motive force-driven ATP synthesis"/>
    <property type="evidence" value="ECO:0000318"/>
    <property type="project" value="GO_Central"/>
</dbReference>
<dbReference type="Gene3D" id="1.10.520.20">
    <property type="entry name" value="N-terminal domain of the delta subunit of the F1F0-ATP synthase"/>
    <property type="match status" value="1"/>
</dbReference>
<dbReference type="HAMAP" id="MF_01416">
    <property type="entry name" value="ATP_synth_delta_bact"/>
    <property type="match status" value="1"/>
</dbReference>
<dbReference type="InterPro" id="IPR026015">
    <property type="entry name" value="ATP_synth_OSCP/delta_N_sf"/>
</dbReference>
<dbReference type="InterPro" id="IPR000711">
    <property type="entry name" value="ATPase_OSCP/dsu"/>
</dbReference>
<dbReference type="NCBIfam" id="TIGR01145">
    <property type="entry name" value="ATP_synt_delta"/>
    <property type="match status" value="1"/>
</dbReference>
<dbReference type="NCBIfam" id="NF009964">
    <property type="entry name" value="PRK13429.1-3"/>
    <property type="match status" value="1"/>
</dbReference>
<dbReference type="PANTHER" id="PTHR11910">
    <property type="entry name" value="ATP SYNTHASE DELTA CHAIN"/>
    <property type="match status" value="1"/>
</dbReference>
<dbReference type="Pfam" id="PF00213">
    <property type="entry name" value="OSCP"/>
    <property type="match status" value="1"/>
</dbReference>
<dbReference type="PRINTS" id="PR00125">
    <property type="entry name" value="ATPASEDELTA"/>
</dbReference>
<dbReference type="SUPFAM" id="SSF47928">
    <property type="entry name" value="N-terminal domain of the delta subunit of the F1F0-ATP synthase"/>
    <property type="match status" value="1"/>
</dbReference>
<organism>
    <name type="scientific">Bacteroides thetaiotaomicron (strain ATCC 29148 / DSM 2079 / JCM 5827 / CCUG 10774 / NCTC 10582 / VPI-5482 / E50)</name>
    <dbReference type="NCBI Taxonomy" id="226186"/>
    <lineage>
        <taxon>Bacteria</taxon>
        <taxon>Pseudomonadati</taxon>
        <taxon>Bacteroidota</taxon>
        <taxon>Bacteroidia</taxon>
        <taxon>Bacteroidales</taxon>
        <taxon>Bacteroidaceae</taxon>
        <taxon>Bacteroides</taxon>
    </lineage>
</organism>